<gene>
    <name evidence="1" type="primary">guaA</name>
    <name type="ordered locus">Pnuc_1422</name>
</gene>
<comment type="function">
    <text evidence="1">Catalyzes the synthesis of GMP from XMP.</text>
</comment>
<comment type="catalytic activity">
    <reaction evidence="1">
        <text>XMP + L-glutamine + ATP + H2O = GMP + L-glutamate + AMP + diphosphate + 2 H(+)</text>
        <dbReference type="Rhea" id="RHEA:11680"/>
        <dbReference type="ChEBI" id="CHEBI:15377"/>
        <dbReference type="ChEBI" id="CHEBI:15378"/>
        <dbReference type="ChEBI" id="CHEBI:29985"/>
        <dbReference type="ChEBI" id="CHEBI:30616"/>
        <dbReference type="ChEBI" id="CHEBI:33019"/>
        <dbReference type="ChEBI" id="CHEBI:57464"/>
        <dbReference type="ChEBI" id="CHEBI:58115"/>
        <dbReference type="ChEBI" id="CHEBI:58359"/>
        <dbReference type="ChEBI" id="CHEBI:456215"/>
        <dbReference type="EC" id="6.3.5.2"/>
    </reaction>
</comment>
<comment type="pathway">
    <text evidence="1">Purine metabolism; GMP biosynthesis; GMP from XMP (L-Gln route): step 1/1.</text>
</comment>
<comment type="subunit">
    <text evidence="1">Homodimer.</text>
</comment>
<feature type="chain" id="PRO_1000120355" description="GMP synthase [glutamine-hydrolyzing]">
    <location>
        <begin position="1"/>
        <end position="535"/>
    </location>
</feature>
<feature type="domain" description="Glutamine amidotransferase type-1" evidence="1">
    <location>
        <begin position="4"/>
        <end position="210"/>
    </location>
</feature>
<feature type="domain" description="GMPS ATP-PPase" evidence="1">
    <location>
        <begin position="211"/>
        <end position="403"/>
    </location>
</feature>
<feature type="active site" description="Nucleophile" evidence="1">
    <location>
        <position position="85"/>
    </location>
</feature>
<feature type="active site" evidence="1">
    <location>
        <position position="184"/>
    </location>
</feature>
<feature type="active site" evidence="1">
    <location>
        <position position="186"/>
    </location>
</feature>
<feature type="binding site" evidence="1">
    <location>
        <begin position="238"/>
        <end position="244"/>
    </location>
    <ligand>
        <name>ATP</name>
        <dbReference type="ChEBI" id="CHEBI:30616"/>
    </ligand>
</feature>
<sequence length="535" mass="59002">MHDKILILDFGSQVTQLIARRVRDARVYSEIHPYDCDPEFIRKFIQEQGGKGIILSGGPNSVTEDGSPRAPQIVFELGVPVLGICYGMQTMATQLGGAVASAESLGKAREFGYSEVRAHGHTNLLKGIQDFSTSEGHGILKVWMSHGDSVTALPPAFKLMASTESCPIAGMADEDRRFYAFQFHPEVTHTIQGTAIIERFVHEICHCKPDWVMGDYIAEAVEHIRKQVGDEEVILGLSGGVDSSVAAALIHRAIGDQLTCVFVDHGLLRLNEGDMVMEMFARNLGVKVIRVDAASTFMGKLTGVADPEAKRKIIGKEFVEIFQSESGKIENAKWLAQGTIYPDVIESAGKGKKGAHTIKSHHNVGGLPEDMHLKLLEPLRELFKDEVRELGVALGLPREMVYRHPFPGPGLGVRILGEVKAEFASLLQRADAIFIEELRNTIDEVSQKSWYDLTSQAFAVFLPVKSVGVMGDGRTYEYVVALRAVQTQDFMTAHWAHLPHELLGKVSNRIINEVRGINRVVYDISGKPPATIEWE</sequence>
<protein>
    <recommendedName>
        <fullName evidence="1">GMP synthase [glutamine-hydrolyzing]</fullName>
        <ecNumber evidence="1">6.3.5.2</ecNumber>
    </recommendedName>
    <alternativeName>
        <fullName evidence="1">GMP synthetase</fullName>
    </alternativeName>
    <alternativeName>
        <fullName evidence="1">Glutamine amidotransferase</fullName>
    </alternativeName>
</protein>
<name>GUAA_POLAQ</name>
<keyword id="KW-0067">ATP-binding</keyword>
<keyword id="KW-0315">Glutamine amidotransferase</keyword>
<keyword id="KW-0332">GMP biosynthesis</keyword>
<keyword id="KW-0436">Ligase</keyword>
<keyword id="KW-0547">Nucleotide-binding</keyword>
<keyword id="KW-0658">Purine biosynthesis</keyword>
<keyword id="KW-1185">Reference proteome</keyword>
<evidence type="ECO:0000255" key="1">
    <source>
        <dbReference type="HAMAP-Rule" id="MF_00344"/>
    </source>
</evidence>
<dbReference type="EC" id="6.3.5.2" evidence="1"/>
<dbReference type="EMBL" id="CP000655">
    <property type="protein sequence ID" value="ABP34636.1"/>
    <property type="molecule type" value="Genomic_DNA"/>
</dbReference>
<dbReference type="RefSeq" id="WP_011903261.1">
    <property type="nucleotide sequence ID" value="NC_009379.1"/>
</dbReference>
<dbReference type="SMR" id="A4SYS2"/>
<dbReference type="MEROPS" id="C26.957"/>
<dbReference type="GeneID" id="31481814"/>
<dbReference type="KEGG" id="pnu:Pnuc_1422"/>
<dbReference type="eggNOG" id="COG0518">
    <property type="taxonomic scope" value="Bacteria"/>
</dbReference>
<dbReference type="eggNOG" id="COG0519">
    <property type="taxonomic scope" value="Bacteria"/>
</dbReference>
<dbReference type="HOGENOM" id="CLU_014340_0_5_4"/>
<dbReference type="UniPathway" id="UPA00189">
    <property type="reaction ID" value="UER00296"/>
</dbReference>
<dbReference type="Proteomes" id="UP000000231">
    <property type="component" value="Chromosome"/>
</dbReference>
<dbReference type="GO" id="GO:0005829">
    <property type="term" value="C:cytosol"/>
    <property type="evidence" value="ECO:0007669"/>
    <property type="project" value="TreeGrafter"/>
</dbReference>
<dbReference type="GO" id="GO:0005524">
    <property type="term" value="F:ATP binding"/>
    <property type="evidence" value="ECO:0007669"/>
    <property type="project" value="UniProtKB-UniRule"/>
</dbReference>
<dbReference type="GO" id="GO:0003921">
    <property type="term" value="F:GMP synthase activity"/>
    <property type="evidence" value="ECO:0007669"/>
    <property type="project" value="InterPro"/>
</dbReference>
<dbReference type="CDD" id="cd01742">
    <property type="entry name" value="GATase1_GMP_Synthase"/>
    <property type="match status" value="1"/>
</dbReference>
<dbReference type="CDD" id="cd01997">
    <property type="entry name" value="GMP_synthase_C"/>
    <property type="match status" value="1"/>
</dbReference>
<dbReference type="FunFam" id="3.30.300.10:FF:000002">
    <property type="entry name" value="GMP synthase [glutamine-hydrolyzing]"/>
    <property type="match status" value="1"/>
</dbReference>
<dbReference type="FunFam" id="3.40.50.620:FF:000001">
    <property type="entry name" value="GMP synthase [glutamine-hydrolyzing]"/>
    <property type="match status" value="1"/>
</dbReference>
<dbReference type="FunFam" id="3.40.50.880:FF:000001">
    <property type="entry name" value="GMP synthase [glutamine-hydrolyzing]"/>
    <property type="match status" value="1"/>
</dbReference>
<dbReference type="Gene3D" id="3.30.300.10">
    <property type="match status" value="1"/>
</dbReference>
<dbReference type="Gene3D" id="3.40.50.880">
    <property type="match status" value="1"/>
</dbReference>
<dbReference type="Gene3D" id="3.40.50.620">
    <property type="entry name" value="HUPs"/>
    <property type="match status" value="1"/>
</dbReference>
<dbReference type="HAMAP" id="MF_00344">
    <property type="entry name" value="GMP_synthase"/>
    <property type="match status" value="1"/>
</dbReference>
<dbReference type="InterPro" id="IPR029062">
    <property type="entry name" value="Class_I_gatase-like"/>
</dbReference>
<dbReference type="InterPro" id="IPR017926">
    <property type="entry name" value="GATASE"/>
</dbReference>
<dbReference type="InterPro" id="IPR001674">
    <property type="entry name" value="GMP_synth_C"/>
</dbReference>
<dbReference type="InterPro" id="IPR004739">
    <property type="entry name" value="GMP_synth_GATase"/>
</dbReference>
<dbReference type="InterPro" id="IPR022955">
    <property type="entry name" value="GMP_synthase"/>
</dbReference>
<dbReference type="InterPro" id="IPR025777">
    <property type="entry name" value="GMPS_ATP_PPase_dom"/>
</dbReference>
<dbReference type="InterPro" id="IPR022310">
    <property type="entry name" value="NAD/GMP_synthase"/>
</dbReference>
<dbReference type="InterPro" id="IPR014729">
    <property type="entry name" value="Rossmann-like_a/b/a_fold"/>
</dbReference>
<dbReference type="NCBIfam" id="TIGR00884">
    <property type="entry name" value="guaA_Cterm"/>
    <property type="match status" value="1"/>
</dbReference>
<dbReference type="NCBIfam" id="TIGR00888">
    <property type="entry name" value="guaA_Nterm"/>
    <property type="match status" value="1"/>
</dbReference>
<dbReference type="NCBIfam" id="NF000848">
    <property type="entry name" value="PRK00074.1"/>
    <property type="match status" value="1"/>
</dbReference>
<dbReference type="PANTHER" id="PTHR11922:SF2">
    <property type="entry name" value="GMP SYNTHASE [GLUTAMINE-HYDROLYZING]"/>
    <property type="match status" value="1"/>
</dbReference>
<dbReference type="PANTHER" id="PTHR11922">
    <property type="entry name" value="GMP SYNTHASE-RELATED"/>
    <property type="match status" value="1"/>
</dbReference>
<dbReference type="Pfam" id="PF00117">
    <property type="entry name" value="GATase"/>
    <property type="match status" value="1"/>
</dbReference>
<dbReference type="Pfam" id="PF00958">
    <property type="entry name" value="GMP_synt_C"/>
    <property type="match status" value="1"/>
</dbReference>
<dbReference type="Pfam" id="PF02540">
    <property type="entry name" value="NAD_synthase"/>
    <property type="match status" value="1"/>
</dbReference>
<dbReference type="PRINTS" id="PR00097">
    <property type="entry name" value="ANTSNTHASEII"/>
</dbReference>
<dbReference type="PRINTS" id="PR00096">
    <property type="entry name" value="GATASE"/>
</dbReference>
<dbReference type="SUPFAM" id="SSF52402">
    <property type="entry name" value="Adenine nucleotide alpha hydrolases-like"/>
    <property type="match status" value="1"/>
</dbReference>
<dbReference type="SUPFAM" id="SSF52317">
    <property type="entry name" value="Class I glutamine amidotransferase-like"/>
    <property type="match status" value="1"/>
</dbReference>
<dbReference type="SUPFAM" id="SSF54810">
    <property type="entry name" value="GMP synthetase C-terminal dimerisation domain"/>
    <property type="match status" value="1"/>
</dbReference>
<dbReference type="PROSITE" id="PS51273">
    <property type="entry name" value="GATASE_TYPE_1"/>
    <property type="match status" value="1"/>
</dbReference>
<dbReference type="PROSITE" id="PS51553">
    <property type="entry name" value="GMPS_ATP_PPASE"/>
    <property type="match status" value="1"/>
</dbReference>
<organism>
    <name type="scientific">Polynucleobacter asymbioticus (strain DSM 18221 / CIP 109841 / QLW-P1DMWA-1)</name>
    <name type="common">Polynucleobacter necessarius subsp. asymbioticus</name>
    <dbReference type="NCBI Taxonomy" id="312153"/>
    <lineage>
        <taxon>Bacteria</taxon>
        <taxon>Pseudomonadati</taxon>
        <taxon>Pseudomonadota</taxon>
        <taxon>Betaproteobacteria</taxon>
        <taxon>Burkholderiales</taxon>
        <taxon>Burkholderiaceae</taxon>
        <taxon>Polynucleobacter</taxon>
    </lineage>
</organism>
<accession>A4SYS2</accession>
<proteinExistence type="inferred from homology"/>
<reference key="1">
    <citation type="journal article" date="2012" name="Stand. Genomic Sci.">
        <title>Complete genome sequence of Polynucleobacter necessarius subsp. asymbioticus type strain (QLW-P1DMWA-1(T)).</title>
        <authorList>
            <person name="Meincke L."/>
            <person name="Copeland A."/>
            <person name="Lapidus A."/>
            <person name="Lucas S."/>
            <person name="Berry K.W."/>
            <person name="Del Rio T.G."/>
            <person name="Hammon N."/>
            <person name="Dalin E."/>
            <person name="Tice H."/>
            <person name="Pitluck S."/>
            <person name="Richardson P."/>
            <person name="Bruce D."/>
            <person name="Goodwin L."/>
            <person name="Han C."/>
            <person name="Tapia R."/>
            <person name="Detter J.C."/>
            <person name="Schmutz J."/>
            <person name="Brettin T."/>
            <person name="Larimer F."/>
            <person name="Land M."/>
            <person name="Hauser L."/>
            <person name="Kyrpides N.C."/>
            <person name="Ivanova N."/>
            <person name="Goker M."/>
            <person name="Woyke T."/>
            <person name="Wu Q.L."/>
            <person name="Pockl M."/>
            <person name="Hahn M.W."/>
            <person name="Klenk H.P."/>
        </authorList>
    </citation>
    <scope>NUCLEOTIDE SEQUENCE [LARGE SCALE GENOMIC DNA]</scope>
    <source>
        <strain>DSM 18221 / CIP 109841 / QLW-P1DMWA-1</strain>
    </source>
</reference>